<comment type="function">
    <text evidence="1">Together with its co-chaperonin GroES, plays an essential role in assisting protein folding. The GroEL-GroES system forms a nano-cage that allows encapsulation of the non-native substrate proteins and provides a physical environment optimized to promote and accelerate protein folding.</text>
</comment>
<comment type="catalytic activity">
    <reaction evidence="1">
        <text>ATP + H2O + a folded polypeptide = ADP + phosphate + an unfolded polypeptide.</text>
        <dbReference type="EC" id="5.6.1.7"/>
    </reaction>
</comment>
<comment type="subunit">
    <text evidence="1">Forms a cylinder of 14 subunits composed of two heptameric rings stacked back-to-back. Interacts with the co-chaperonin GroES.</text>
</comment>
<comment type="subcellular location">
    <subcellularLocation>
        <location evidence="1">Cytoplasm</location>
    </subcellularLocation>
</comment>
<comment type="similarity">
    <text evidence="1">Belongs to the chaperonin (HSP60) family.</text>
</comment>
<dbReference type="EC" id="5.6.1.7" evidence="1"/>
<dbReference type="EMBL" id="CR628336">
    <property type="protein sequence ID" value="CAH11891.1"/>
    <property type="molecule type" value="Genomic_DNA"/>
</dbReference>
<dbReference type="SMR" id="Q5X762"/>
<dbReference type="MoonProt" id="Q5X762"/>
<dbReference type="KEGG" id="lpp:lpp0743"/>
<dbReference type="LegioList" id="lpp0743"/>
<dbReference type="HOGENOM" id="CLU_016503_3_0_6"/>
<dbReference type="GO" id="GO:0005737">
    <property type="term" value="C:cytoplasm"/>
    <property type="evidence" value="ECO:0007669"/>
    <property type="project" value="UniProtKB-SubCell"/>
</dbReference>
<dbReference type="GO" id="GO:0005524">
    <property type="term" value="F:ATP binding"/>
    <property type="evidence" value="ECO:0007669"/>
    <property type="project" value="UniProtKB-UniRule"/>
</dbReference>
<dbReference type="GO" id="GO:0140662">
    <property type="term" value="F:ATP-dependent protein folding chaperone"/>
    <property type="evidence" value="ECO:0007669"/>
    <property type="project" value="InterPro"/>
</dbReference>
<dbReference type="GO" id="GO:0016853">
    <property type="term" value="F:isomerase activity"/>
    <property type="evidence" value="ECO:0007669"/>
    <property type="project" value="UniProtKB-KW"/>
</dbReference>
<dbReference type="GO" id="GO:0051082">
    <property type="term" value="F:unfolded protein binding"/>
    <property type="evidence" value="ECO:0007669"/>
    <property type="project" value="UniProtKB-UniRule"/>
</dbReference>
<dbReference type="GO" id="GO:0042026">
    <property type="term" value="P:protein refolding"/>
    <property type="evidence" value="ECO:0007669"/>
    <property type="project" value="UniProtKB-UniRule"/>
</dbReference>
<dbReference type="CDD" id="cd03344">
    <property type="entry name" value="GroEL"/>
    <property type="match status" value="1"/>
</dbReference>
<dbReference type="FunFam" id="1.10.560.10:FF:000001">
    <property type="entry name" value="60 kDa chaperonin"/>
    <property type="match status" value="1"/>
</dbReference>
<dbReference type="FunFam" id="3.50.7.10:FF:000001">
    <property type="entry name" value="60 kDa chaperonin"/>
    <property type="match status" value="1"/>
</dbReference>
<dbReference type="Gene3D" id="3.50.7.10">
    <property type="entry name" value="GroEL"/>
    <property type="match status" value="1"/>
</dbReference>
<dbReference type="Gene3D" id="1.10.560.10">
    <property type="entry name" value="GroEL-like equatorial domain"/>
    <property type="match status" value="1"/>
</dbReference>
<dbReference type="Gene3D" id="3.30.260.10">
    <property type="entry name" value="TCP-1-like chaperonin intermediate domain"/>
    <property type="match status" value="1"/>
</dbReference>
<dbReference type="HAMAP" id="MF_00600">
    <property type="entry name" value="CH60"/>
    <property type="match status" value="1"/>
</dbReference>
<dbReference type="InterPro" id="IPR018370">
    <property type="entry name" value="Chaperonin_Cpn60_CS"/>
</dbReference>
<dbReference type="InterPro" id="IPR001844">
    <property type="entry name" value="Cpn60/GroEL"/>
</dbReference>
<dbReference type="InterPro" id="IPR002423">
    <property type="entry name" value="Cpn60/GroEL/TCP-1"/>
</dbReference>
<dbReference type="InterPro" id="IPR027409">
    <property type="entry name" value="GroEL-like_apical_dom_sf"/>
</dbReference>
<dbReference type="InterPro" id="IPR027413">
    <property type="entry name" value="GROEL-like_equatorial_sf"/>
</dbReference>
<dbReference type="InterPro" id="IPR027410">
    <property type="entry name" value="TCP-1-like_intermed_sf"/>
</dbReference>
<dbReference type="NCBIfam" id="TIGR02348">
    <property type="entry name" value="GroEL"/>
    <property type="match status" value="1"/>
</dbReference>
<dbReference type="NCBIfam" id="NF000592">
    <property type="entry name" value="PRK00013.1"/>
    <property type="match status" value="1"/>
</dbReference>
<dbReference type="NCBIfam" id="NF009487">
    <property type="entry name" value="PRK12849.1"/>
    <property type="match status" value="1"/>
</dbReference>
<dbReference type="NCBIfam" id="NF009488">
    <property type="entry name" value="PRK12850.1"/>
    <property type="match status" value="1"/>
</dbReference>
<dbReference type="NCBIfam" id="NF009489">
    <property type="entry name" value="PRK12851.1"/>
    <property type="match status" value="1"/>
</dbReference>
<dbReference type="PANTHER" id="PTHR45633">
    <property type="entry name" value="60 KDA HEAT SHOCK PROTEIN, MITOCHONDRIAL"/>
    <property type="match status" value="1"/>
</dbReference>
<dbReference type="Pfam" id="PF00118">
    <property type="entry name" value="Cpn60_TCP1"/>
    <property type="match status" value="1"/>
</dbReference>
<dbReference type="PRINTS" id="PR00298">
    <property type="entry name" value="CHAPERONIN60"/>
</dbReference>
<dbReference type="SUPFAM" id="SSF52029">
    <property type="entry name" value="GroEL apical domain-like"/>
    <property type="match status" value="1"/>
</dbReference>
<dbReference type="SUPFAM" id="SSF48592">
    <property type="entry name" value="GroEL equatorial domain-like"/>
    <property type="match status" value="1"/>
</dbReference>
<dbReference type="SUPFAM" id="SSF54849">
    <property type="entry name" value="GroEL-intermediate domain like"/>
    <property type="match status" value="1"/>
</dbReference>
<dbReference type="PROSITE" id="PS00296">
    <property type="entry name" value="CHAPERONINS_CPN60"/>
    <property type="match status" value="1"/>
</dbReference>
<reference key="1">
    <citation type="journal article" date="2004" name="Nat. Genet.">
        <title>Evidence in the Legionella pneumophila genome for exploitation of host cell functions and high genome plasticity.</title>
        <authorList>
            <person name="Cazalet C."/>
            <person name="Rusniok C."/>
            <person name="Brueggemann H."/>
            <person name="Zidane N."/>
            <person name="Magnier A."/>
            <person name="Ma L."/>
            <person name="Tichit M."/>
            <person name="Jarraud S."/>
            <person name="Bouchier C."/>
            <person name="Vandenesch F."/>
            <person name="Kunst F."/>
            <person name="Etienne J."/>
            <person name="Glaser P."/>
            <person name="Buchrieser C."/>
        </authorList>
    </citation>
    <scope>NUCLEOTIDE SEQUENCE [LARGE SCALE GENOMIC DNA]</scope>
    <source>
        <strain>Paris</strain>
    </source>
</reference>
<keyword id="KW-0067">ATP-binding</keyword>
<keyword id="KW-0143">Chaperone</keyword>
<keyword id="KW-0963">Cytoplasm</keyword>
<keyword id="KW-0413">Isomerase</keyword>
<keyword id="KW-0547">Nucleotide-binding</keyword>
<protein>
    <recommendedName>
        <fullName evidence="1">Chaperonin GroEL</fullName>
        <ecNumber evidence="1">5.6.1.7</ecNumber>
    </recommendedName>
    <alternativeName>
        <fullName evidence="1">60 kDa chaperonin</fullName>
    </alternativeName>
    <alternativeName>
        <fullName evidence="1">Chaperonin-60</fullName>
        <shortName evidence="1">Cpn60</shortName>
    </alternativeName>
</protein>
<accession>Q5X762</accession>
<evidence type="ECO:0000255" key="1">
    <source>
        <dbReference type="HAMAP-Rule" id="MF_00600"/>
    </source>
</evidence>
<organism>
    <name type="scientific">Legionella pneumophila (strain Paris)</name>
    <dbReference type="NCBI Taxonomy" id="297246"/>
    <lineage>
        <taxon>Bacteria</taxon>
        <taxon>Pseudomonadati</taxon>
        <taxon>Pseudomonadota</taxon>
        <taxon>Gammaproteobacteria</taxon>
        <taxon>Legionellales</taxon>
        <taxon>Legionellaceae</taxon>
        <taxon>Legionella</taxon>
    </lineage>
</organism>
<sequence>MAKELRFGDDARLQMLAGVNALADAVQVTMGPRGRNVVLEKSYGAPTVTKDGVSVAKEIEFEHRFMNMGAQMVKEVASKTSDTAGDGTTTATVLARSILVEGHKAVAAGMNPMDLKRGIDKAVLAVTKKLQAMSKPCKDSKAIAQVGTISANSDEAIGAIIAEAMEKVGKEGVITVEDGNGLENELSVVEGMQFDRGYISPYFINNQQNMSCELEHPFILLVDKKVSSIREMLSVLEGVAKSGRPLLIIAEDVEGEALATLVVNNMRGIVKVCAVKAPGFGDRRKAMLQDIAILTKGQVISEEIGKSLEGATLEDLGSAKRIVVTKENTTIIDGEGKATEINARIAQIRAQMEETTSDYDREKLQERVAKLAGGVAVIKVGAATEVEMKEKKARVEDALHATRAAVEEGIVAGGGVALIRAQKALDSLKGDNDDQNMGINILRRAIESPMRQIVTNAGYEASVVVNKVAEHKDNYGFNAATGEYGDMVEMGILDPTKVTRMALQNAASVASLMLTTECMVADLPKKEEGVGAGDMGGMGGMGGMGGMM</sequence>
<feature type="chain" id="PRO_0000063405" description="Chaperonin GroEL">
    <location>
        <begin position="1"/>
        <end position="548"/>
    </location>
</feature>
<feature type="binding site" evidence="1">
    <location>
        <begin position="29"/>
        <end position="32"/>
    </location>
    <ligand>
        <name>ATP</name>
        <dbReference type="ChEBI" id="CHEBI:30616"/>
    </ligand>
</feature>
<feature type="binding site" evidence="1">
    <location>
        <position position="50"/>
    </location>
    <ligand>
        <name>ATP</name>
        <dbReference type="ChEBI" id="CHEBI:30616"/>
    </ligand>
</feature>
<feature type="binding site" evidence="1">
    <location>
        <begin position="86"/>
        <end position="90"/>
    </location>
    <ligand>
        <name>ATP</name>
        <dbReference type="ChEBI" id="CHEBI:30616"/>
    </ligand>
</feature>
<feature type="binding site" evidence="1">
    <location>
        <position position="414"/>
    </location>
    <ligand>
        <name>ATP</name>
        <dbReference type="ChEBI" id="CHEBI:30616"/>
    </ligand>
</feature>
<feature type="binding site" evidence="1">
    <location>
        <begin position="478"/>
        <end position="480"/>
    </location>
    <ligand>
        <name>ATP</name>
        <dbReference type="ChEBI" id="CHEBI:30616"/>
    </ligand>
</feature>
<feature type="binding site" evidence="1">
    <location>
        <position position="494"/>
    </location>
    <ligand>
        <name>ATP</name>
        <dbReference type="ChEBI" id="CHEBI:30616"/>
    </ligand>
</feature>
<proteinExistence type="inferred from homology"/>
<gene>
    <name evidence="1" type="primary">groEL</name>
    <name evidence="1" type="synonym">groL</name>
    <name type="ordered locus">lpp0743</name>
</gene>
<name>CH60_LEGPA</name>